<protein>
    <recommendedName>
        <fullName evidence="1">Large ribosomal subunit protein eL32</fullName>
    </recommendedName>
    <alternativeName>
        <fullName>50S ribosomal protein L32e</fullName>
    </alternativeName>
    <alternativeName>
        <fullName>ORF D</fullName>
    </alternativeName>
</protein>
<sequence>MSEFKRLMRLKLKMKQKRPEFKRQDSHRFQRIGTMWRRPTGHHSGQRIQVTYRLSPVKIGFRGPALVRGLHPSGLEDIIVNNVKQLAALNPKTQGARIASAVGTRKRIEIVKKANELGIRVFNVSKQKQGEFLSL</sequence>
<reference key="1">
    <citation type="journal article" date="1989" name="J. Mol. Biol.">
        <title>Organization and structure of the Methanococcus transcriptional unit homologous to the Escherichia coli 'spectinomycin operon'. Implications for the evolutionary relationship of 70 S and 80 S ribosomes.</title>
        <authorList>
            <person name="Auer J."/>
            <person name="Spicker G."/>
            <person name="Boeck A."/>
        </authorList>
    </citation>
    <scope>NUCLEOTIDE SEQUENCE [GENOMIC DNA]</scope>
</reference>
<proteinExistence type="inferred from homology"/>
<feature type="chain" id="PRO_0000131156" description="Large ribosomal subunit protein eL32">
    <location>
        <begin position="1"/>
        <end position="135"/>
    </location>
</feature>
<accession>P14549</accession>
<organism>
    <name type="scientific">Methanococcus vannielii</name>
    <dbReference type="NCBI Taxonomy" id="2187"/>
    <lineage>
        <taxon>Archaea</taxon>
        <taxon>Methanobacteriati</taxon>
        <taxon>Methanobacteriota</taxon>
        <taxon>Methanomada group</taxon>
        <taxon>Methanococci</taxon>
        <taxon>Methanococcales</taxon>
        <taxon>Methanococcaceae</taxon>
        <taxon>Methanococcus</taxon>
    </lineage>
</organism>
<comment type="similarity">
    <text evidence="1">Belongs to the eukaryotic ribosomal protein eL32 family.</text>
</comment>
<keyword id="KW-0687">Ribonucleoprotein</keyword>
<keyword id="KW-0689">Ribosomal protein</keyword>
<name>RL32_METVA</name>
<gene>
    <name type="primary">rpl32e</name>
</gene>
<dbReference type="EMBL" id="X16720">
    <property type="protein sequence ID" value="CAA34697.1"/>
    <property type="molecule type" value="Genomic_DNA"/>
</dbReference>
<dbReference type="PIR" id="S05621">
    <property type="entry name" value="R5MXD"/>
</dbReference>
<dbReference type="SMR" id="P14549"/>
<dbReference type="OMA" id="HPSGYEE"/>
<dbReference type="GO" id="GO:0022625">
    <property type="term" value="C:cytosolic large ribosomal subunit"/>
    <property type="evidence" value="ECO:0007669"/>
    <property type="project" value="TreeGrafter"/>
</dbReference>
<dbReference type="GO" id="GO:0003735">
    <property type="term" value="F:structural constituent of ribosome"/>
    <property type="evidence" value="ECO:0007669"/>
    <property type="project" value="InterPro"/>
</dbReference>
<dbReference type="GO" id="GO:0006412">
    <property type="term" value="P:translation"/>
    <property type="evidence" value="ECO:0007669"/>
    <property type="project" value="UniProtKB-UniRule"/>
</dbReference>
<dbReference type="CDD" id="cd00513">
    <property type="entry name" value="Ribosomal_L32_L32e"/>
    <property type="match status" value="1"/>
</dbReference>
<dbReference type="HAMAP" id="MF_00810">
    <property type="entry name" value="Ribosomal_eL32"/>
    <property type="match status" value="1"/>
</dbReference>
<dbReference type="InterPro" id="IPR001515">
    <property type="entry name" value="Ribosomal_eL32"/>
</dbReference>
<dbReference type="InterPro" id="IPR023654">
    <property type="entry name" value="Ribosomal_eL32_arc"/>
</dbReference>
<dbReference type="InterPro" id="IPR018263">
    <property type="entry name" value="Ribosomal_eL32_CS"/>
</dbReference>
<dbReference type="InterPro" id="IPR036351">
    <property type="entry name" value="Ribosomal_eL32_sf"/>
</dbReference>
<dbReference type="NCBIfam" id="NF006332">
    <property type="entry name" value="PRK08562.1"/>
    <property type="match status" value="1"/>
</dbReference>
<dbReference type="PANTHER" id="PTHR23413">
    <property type="entry name" value="60S RIBOSOMAL PROTEIN L32 AND DNA-DIRECTED RNA POLYMERASE II, SUBUNIT N"/>
    <property type="match status" value="1"/>
</dbReference>
<dbReference type="PANTHER" id="PTHR23413:SF1">
    <property type="entry name" value="RIBOSOMAL PROTEIN L32"/>
    <property type="match status" value="1"/>
</dbReference>
<dbReference type="Pfam" id="PF01655">
    <property type="entry name" value="Ribosomal_L32e"/>
    <property type="match status" value="1"/>
</dbReference>
<dbReference type="SMART" id="SM01393">
    <property type="entry name" value="Ribosomal_L32e"/>
    <property type="match status" value="1"/>
</dbReference>
<dbReference type="SUPFAM" id="SSF52042">
    <property type="entry name" value="Ribosomal protein L32e"/>
    <property type="match status" value="1"/>
</dbReference>
<dbReference type="PROSITE" id="PS00580">
    <property type="entry name" value="RIBOSOMAL_L32E"/>
    <property type="match status" value="1"/>
</dbReference>
<evidence type="ECO:0000305" key="1"/>